<reference key="1">
    <citation type="journal article" date="1985" name="Virology">
        <title>Cloning and sequencing of the granulin gene from the Trichoplusia ni granulosis virus.</title>
        <authorList>
            <person name="Akiyoshi D."/>
            <person name="Chakerian R."/>
            <person name="Rohrmann G.F."/>
            <person name="Nesson M.H."/>
            <person name="Beaudreau G.S."/>
        </authorList>
    </citation>
    <scope>NUCLEOTIDE SEQUENCE [GENOMIC DNA]</scope>
</reference>
<organismHost>
    <name type="scientific">Trichoplusia ni</name>
    <name type="common">Cabbage looper</name>
    <dbReference type="NCBI Taxonomy" id="7111"/>
</organismHost>
<feature type="chain" id="PRO_0000217267" description="Granulin">
    <location>
        <begin position="1"/>
        <end position="248"/>
    </location>
</feature>
<name>GRAN_GVTN</name>
<dbReference type="EMBL" id="K02910">
    <property type="protein sequence ID" value="AAA43834.1"/>
    <property type="molecule type" value="Genomic_DNA"/>
</dbReference>
<dbReference type="PIR" id="A46542">
    <property type="entry name" value="A46542"/>
</dbReference>
<dbReference type="SMR" id="P06503"/>
<dbReference type="GO" id="GO:0039679">
    <property type="term" value="C:viral occlusion body"/>
    <property type="evidence" value="ECO:0007669"/>
    <property type="project" value="UniProtKB-KW"/>
</dbReference>
<dbReference type="GO" id="GO:0005198">
    <property type="term" value="F:structural molecule activity"/>
    <property type="evidence" value="ECO:0007669"/>
    <property type="project" value="InterPro"/>
</dbReference>
<dbReference type="InterPro" id="IPR001746">
    <property type="entry name" value="Polyhedrin"/>
</dbReference>
<dbReference type="Pfam" id="PF00738">
    <property type="entry name" value="Polyhedrin"/>
    <property type="match status" value="1"/>
</dbReference>
<comment type="function">
    <text>Component of the virus occlusion bodies, which are large proteinaceous structures, that protect the virus from the outside environment for extended periods until they are ingested by insect larvae.</text>
</comment>
<comment type="similarity">
    <text evidence="1">Belongs to the polyhedrin family.</text>
</comment>
<keyword id="KW-0842">Viral occlusion body</keyword>
<organism>
    <name type="scientific">Trichoplusia ni granulosis virus</name>
    <name type="common">TnGV</name>
    <name type="synonym">Trichoplusia ni granulovirus</name>
    <dbReference type="NCBI Taxonomy" id="10462"/>
    <lineage>
        <taxon>Viruses</taxon>
        <taxon>Viruses incertae sedis</taxon>
        <taxon>Naldaviricetes</taxon>
        <taxon>Lefavirales</taxon>
        <taxon>Baculoviridae</taxon>
        <taxon>Betabaculovirus</taxon>
        <taxon>Betabaculovirus trini</taxon>
    </lineage>
</organism>
<proteinExistence type="inferred from homology"/>
<sequence>MGYNKSLRYSRHNGTTCVIDNKHLKTLGSVLGDVRHKEELIREAQFDPIKDIANQYMVTEDPFRGPGKNVKITLFKEIRRIQPDTMKLVCNWSGKEFLRETWTRFISEEFPITTDQEIMDLWFELQLRPMQPNRCYKFTMQYALAANPDYVAHDVIRQHDPYYVGPDNRERINLSKRGLAFPLTCLQSIYNENFEEFFDQVLWPYFHRPLVYVGTTSAEIEEVMIEVALLFKIKEFAPDVPLFTGPAY</sequence>
<accession>P06503</accession>
<evidence type="ECO:0000305" key="1"/>
<protein>
    <recommendedName>
        <fullName>Granulin</fullName>
    </recommendedName>
    <alternativeName>
        <fullName>Matrix protein</fullName>
    </alternativeName>
</protein>